<organism>
    <name type="scientific">Gryllus bimaculatus</name>
    <name type="common">Two-spotted cricket</name>
    <dbReference type="NCBI Taxonomy" id="6999"/>
    <lineage>
        <taxon>Eukaryota</taxon>
        <taxon>Metazoa</taxon>
        <taxon>Ecdysozoa</taxon>
        <taxon>Arthropoda</taxon>
        <taxon>Hexapoda</taxon>
        <taxon>Insecta</taxon>
        <taxon>Pterygota</taxon>
        <taxon>Neoptera</taxon>
        <taxon>Polyneoptera</taxon>
        <taxon>Orthoptera</taxon>
        <taxon>Ensifera</taxon>
        <taxon>Gryllidea</taxon>
        <taxon>Grylloidea</taxon>
        <taxon>Gryllidae</taxon>
        <taxon>Gryllinae</taxon>
        <taxon>Gryllus</taxon>
    </lineage>
</organism>
<feature type="peptide" id="PRO_0000043419" description="Adipokinetic hormone G">
    <location>
        <begin position="1"/>
        <end position="8"/>
    </location>
</feature>
<feature type="modified residue" description="Pyrrolidone carboxylic acid" evidence="1">
    <location>
        <position position="1"/>
    </location>
</feature>
<feature type="modified residue" description="Tryptophan amide" evidence="1">
    <location>
        <position position="8"/>
    </location>
</feature>
<keyword id="KW-0027">Amidation</keyword>
<keyword id="KW-0903">Direct protein sequencing</keyword>
<keyword id="KW-0286">Flight</keyword>
<keyword id="KW-0372">Hormone</keyword>
<keyword id="KW-0527">Neuropeptide</keyword>
<keyword id="KW-0873">Pyrrolidone carboxylic acid</keyword>
<keyword id="KW-0964">Secreted</keyword>
<dbReference type="PIR" id="A28004">
    <property type="entry name" value="A28004"/>
</dbReference>
<dbReference type="GO" id="GO:0005576">
    <property type="term" value="C:extracellular region"/>
    <property type="evidence" value="ECO:0007669"/>
    <property type="project" value="UniProtKB-SubCell"/>
</dbReference>
<dbReference type="GO" id="GO:0005179">
    <property type="term" value="F:hormone activity"/>
    <property type="evidence" value="ECO:0007669"/>
    <property type="project" value="UniProtKB-KW"/>
</dbReference>
<dbReference type="GO" id="GO:0007629">
    <property type="term" value="P:flight behavior"/>
    <property type="evidence" value="ECO:0007669"/>
    <property type="project" value="UniProtKB-KW"/>
</dbReference>
<dbReference type="GO" id="GO:0007218">
    <property type="term" value="P:neuropeptide signaling pathway"/>
    <property type="evidence" value="ECO:0007669"/>
    <property type="project" value="UniProtKB-KW"/>
</dbReference>
<dbReference type="InterPro" id="IPR002047">
    <property type="entry name" value="Adipokinetic_hormone_CS"/>
</dbReference>
<dbReference type="PROSITE" id="PS00256">
    <property type="entry name" value="AKH"/>
    <property type="match status" value="1"/>
</dbReference>
<evidence type="ECO:0000269" key="1">
    <source>
    </source>
</evidence>
<evidence type="ECO:0000305" key="2"/>
<comment type="function">
    <text>This hormone, released from cells in the corpora cardiaca, causes release of diglycerides from the fat body and stimulation of muscles to use these diglycerides as an energy source during energy-demanding processes.</text>
</comment>
<comment type="subcellular location">
    <subcellularLocation>
        <location>Secreted</location>
    </subcellularLocation>
</comment>
<comment type="similarity">
    <text evidence="2">Belongs to the AKH/HRTH/RPCH family.</text>
</comment>
<sequence>QVNFSTGW</sequence>
<name>AKHG_GRYBI</name>
<protein>
    <recommendedName>
        <fullName>Adipokinetic hormone G</fullName>
        <shortName>AKH-G</shortName>
    </recommendedName>
</protein>
<accession>P67785</accession>
<accession>P14086</accession>
<reference key="1">
    <citation type="journal article" date="1987" name="Biochem. Biophys. Res. Commun.">
        <title>Primary sequence analysis by fast atom bombardment mass spectrometry of a peptide with adipokinetic activity from the corpora cardiaca of the cricket Gryllus bimaculatus.</title>
        <authorList>
            <person name="Gaede G."/>
            <person name="Rinehart K.L. Jr."/>
        </authorList>
    </citation>
    <scope>PROTEIN SEQUENCE</scope>
    <scope>PYROGLUTAMATE FORMATION AT GLN-1</scope>
    <scope>AMIDATION AT TRP-8</scope>
    <source>
        <tissue>Corpora cardiaca</tissue>
    </source>
</reference>
<proteinExistence type="evidence at protein level"/>